<accession>P9WIP1</accession>
<accession>L0T8A1</accession>
<accession>O08224</accession>
<accession>P0A5Q2</accession>
<accession>P97175</accession>
<name>MP63_MYCTU</name>
<evidence type="ECO:0000269" key="1">
    <source>
    </source>
</evidence>
<evidence type="ECO:0007829" key="2">
    <source>
        <dbReference type="PDB" id="1LMI"/>
    </source>
</evidence>
<dbReference type="EMBL" id="U27119">
    <property type="protein sequence ID" value="AAB95083.1"/>
    <property type="molecule type" value="Genomic_DNA"/>
</dbReference>
<dbReference type="EMBL" id="U82234">
    <property type="protein sequence ID" value="AAB61537.1"/>
    <property type="molecule type" value="Genomic_DNA"/>
</dbReference>
<dbReference type="EMBL" id="AL123456">
    <property type="protein sequence ID" value="CCP44693.1"/>
    <property type="molecule type" value="Genomic_DNA"/>
</dbReference>
<dbReference type="PIR" id="B70635">
    <property type="entry name" value="B70635"/>
</dbReference>
<dbReference type="RefSeq" id="NP_216442.1">
    <property type="nucleotide sequence ID" value="NC_000962.3"/>
</dbReference>
<dbReference type="RefSeq" id="WP_003409684.1">
    <property type="nucleotide sequence ID" value="NZ_NVQJ01000034.1"/>
</dbReference>
<dbReference type="PDB" id="1LMI">
    <property type="method" value="X-ray"/>
    <property type="resolution" value="1.50 A"/>
    <property type="chains" value="A=30-159"/>
</dbReference>
<dbReference type="PDBsum" id="1LMI"/>
<dbReference type="SMR" id="P9WIP1"/>
<dbReference type="STRING" id="83332.Rv1926c"/>
<dbReference type="PaxDb" id="83332-Rv1926c"/>
<dbReference type="DNASU" id="885334"/>
<dbReference type="GeneID" id="885334"/>
<dbReference type="KEGG" id="mtu:Rv1926c"/>
<dbReference type="KEGG" id="mtv:RVBD_1926c"/>
<dbReference type="TubercuList" id="Rv1926c"/>
<dbReference type="eggNOG" id="ENOG5030I03">
    <property type="taxonomic scope" value="Bacteria"/>
</dbReference>
<dbReference type="InParanoid" id="P9WIP1"/>
<dbReference type="OrthoDB" id="4762478at2"/>
<dbReference type="EvolutionaryTrace" id="P9WIP1"/>
<dbReference type="Proteomes" id="UP000001584">
    <property type="component" value="Chromosome"/>
</dbReference>
<dbReference type="GO" id="GO:0005576">
    <property type="term" value="C:extracellular region"/>
    <property type="evidence" value="ECO:0000314"/>
    <property type="project" value="MTBBASE"/>
</dbReference>
<dbReference type="GO" id="GO:0005615">
    <property type="term" value="C:extracellular space"/>
    <property type="evidence" value="ECO:0007669"/>
    <property type="project" value="InterPro"/>
</dbReference>
<dbReference type="GO" id="GO:0009274">
    <property type="term" value="C:peptidoglycan-based cell wall"/>
    <property type="evidence" value="ECO:0007005"/>
    <property type="project" value="MTBBASE"/>
</dbReference>
<dbReference type="FunFam" id="2.60.40.1240:FF:000001">
    <property type="entry name" value="Immunogenic protein MPT63"/>
    <property type="match status" value="1"/>
</dbReference>
<dbReference type="Gene3D" id="2.60.40.1240">
    <property type="match status" value="1"/>
</dbReference>
<dbReference type="InterPro" id="IPR029050">
    <property type="entry name" value="Immunoprotect_excell_Ig-like"/>
</dbReference>
<dbReference type="InterPro" id="IPR015250">
    <property type="entry name" value="MPT63-like"/>
</dbReference>
<dbReference type="Pfam" id="PF09167">
    <property type="entry name" value="DUF1942"/>
    <property type="match status" value="1"/>
</dbReference>
<dbReference type="SUPFAM" id="SSF81982">
    <property type="entry name" value="Antigen MPT63/MPB63 (immunoprotective extracellular protein)"/>
    <property type="match status" value="1"/>
</dbReference>
<reference key="1">
    <citation type="journal article" date="1997" name="Infect. Immun.">
        <title>Molecular cloning, purification, and serological characterization of MPT63, a novel antigen secreted by Mycobacterium tuberculosis.</title>
        <authorList>
            <person name="Manca C.M.A."/>
            <person name="Lyashchenko K."/>
            <person name="Wiker H.G."/>
            <person name="Usai D."/>
            <person name="Colangeli R."/>
            <person name="Gennaro M.L."/>
        </authorList>
    </citation>
    <scope>NUCLEOTIDE SEQUENCE [GENOMIC DNA]</scope>
    <source>
        <strain>ATCC 25618 / H37Rv</strain>
    </source>
</reference>
<reference key="2">
    <citation type="journal article" date="1997" name="Infect. Immun.">
        <title>High-level heterologous expression and secretion in rapidly growing nonpathogenic mycobacteria of four major Mycobacterium tuberculosis extracellular proteins considered to be leading vaccine candidates and drug targets.</title>
        <authorList>
            <person name="Harth G."/>
            <person name="Lee B.Y."/>
            <person name="Horwitz M.A."/>
        </authorList>
    </citation>
    <scope>NUCLEOTIDE SEQUENCE [GENOMIC DNA]</scope>
    <source>
        <strain>ATCC 35801 / TMC 107 / Erdman</strain>
    </source>
</reference>
<reference key="3">
    <citation type="journal article" date="1998" name="Nature">
        <title>Deciphering the biology of Mycobacterium tuberculosis from the complete genome sequence.</title>
        <authorList>
            <person name="Cole S.T."/>
            <person name="Brosch R."/>
            <person name="Parkhill J."/>
            <person name="Garnier T."/>
            <person name="Churcher C.M."/>
            <person name="Harris D.E."/>
            <person name="Gordon S.V."/>
            <person name="Eiglmeier K."/>
            <person name="Gas S."/>
            <person name="Barry C.E. III"/>
            <person name="Tekaia F."/>
            <person name="Badcock K."/>
            <person name="Basham D."/>
            <person name="Brown D."/>
            <person name="Chillingworth T."/>
            <person name="Connor R."/>
            <person name="Davies R.M."/>
            <person name="Devlin K."/>
            <person name="Feltwell T."/>
            <person name="Gentles S."/>
            <person name="Hamlin N."/>
            <person name="Holroyd S."/>
            <person name="Hornsby T."/>
            <person name="Jagels K."/>
            <person name="Krogh A."/>
            <person name="McLean J."/>
            <person name="Moule S."/>
            <person name="Murphy L.D."/>
            <person name="Oliver S."/>
            <person name="Osborne J."/>
            <person name="Quail M.A."/>
            <person name="Rajandream M.A."/>
            <person name="Rogers J."/>
            <person name="Rutter S."/>
            <person name="Seeger K."/>
            <person name="Skelton S."/>
            <person name="Squares S."/>
            <person name="Squares R."/>
            <person name="Sulston J.E."/>
            <person name="Taylor K."/>
            <person name="Whitehead S."/>
            <person name="Barrell B.G."/>
        </authorList>
    </citation>
    <scope>NUCLEOTIDE SEQUENCE [LARGE SCALE GENOMIC DNA]</scope>
    <source>
        <strain>ATCC 25618 / H37Rv</strain>
    </source>
</reference>
<reference key="4">
    <citation type="journal article" date="1995" name="Proc. Natl. Acad. Sci. U.S.A.">
        <title>Protective immunity against tuberculosis induced by vaccination with major extracellular proteins of Mycobacterium tuberculosis.</title>
        <authorList>
            <person name="Horwitz M.A."/>
            <person name="Lee B.W."/>
            <person name="Dillon B.J."/>
            <person name="Harth G."/>
        </authorList>
    </citation>
    <scope>PROTEIN SEQUENCE OF 30-49</scope>
</reference>
<reference key="5">
    <citation type="journal article" date="1991" name="Infect. Immun.">
        <title>Isolation and partial characterization of major protein antigens in the culture fluid of Mycobacterium tuberculosis.</title>
        <authorList>
            <person name="Nagai S."/>
            <person name="Wiker H.G."/>
            <person name="Harboe M."/>
            <person name="Kinomoto M."/>
        </authorList>
    </citation>
    <scope>PARTIAL PROTEIN SEQUENCE</scope>
    <scope>CHARACTERIZATION</scope>
</reference>
<reference key="6">
    <citation type="journal article" date="2011" name="Mol. Cell. Proteomics">
        <title>Proteogenomic analysis of Mycobacterium tuberculosis by high resolution mass spectrometry.</title>
        <authorList>
            <person name="Kelkar D.S."/>
            <person name="Kumar D."/>
            <person name="Kumar P."/>
            <person name="Balakrishnan L."/>
            <person name="Muthusamy B."/>
            <person name="Yadav A.K."/>
            <person name="Shrivastava P."/>
            <person name="Marimuthu A."/>
            <person name="Anand S."/>
            <person name="Sundaram H."/>
            <person name="Kingsbury R."/>
            <person name="Harsha H.C."/>
            <person name="Nair B."/>
            <person name="Prasad T.S."/>
            <person name="Chauhan D.S."/>
            <person name="Katoch K."/>
            <person name="Katoch V.M."/>
            <person name="Kumar P."/>
            <person name="Chaerkady R."/>
            <person name="Ramachandran S."/>
            <person name="Dash D."/>
            <person name="Pandey A."/>
        </authorList>
    </citation>
    <scope>IDENTIFICATION BY MASS SPECTROMETRY [LARGE SCALE ANALYSIS]</scope>
    <source>
        <strain>ATCC 25618 / H37Rv</strain>
    </source>
</reference>
<protein>
    <recommendedName>
        <fullName>Immunogenic protein MPT63</fullName>
    </recommendedName>
    <alternativeName>
        <fullName>16 kDa immunoprotective extracellular protein</fullName>
    </alternativeName>
    <alternativeName>
        <fullName>Antigen MPT63</fullName>
    </alternativeName>
</protein>
<sequence>MKLTTMIKTAVAVVAMAAIATFAAPVALAAYPITGKLGSELTMTDTVGQVVLGWKVSDLKSSTAVIPGYPVAGQVWEATATVNAIRGSVTPAVSQFNARTADGINYRVLWQAAGPDTISGATIPQGEQSTGKIYFDVTGPSPTIVAMNNGMEDLLIWEP</sequence>
<proteinExistence type="evidence at protein level"/>
<gene>
    <name type="primary">mpt63</name>
    <name type="ordered locus">Rv1926c</name>
    <name type="ORF">MTCY09F9.38</name>
</gene>
<keyword id="KW-0002">3D-structure</keyword>
<keyword id="KW-0903">Direct protein sequencing</keyword>
<keyword id="KW-1185">Reference proteome</keyword>
<keyword id="KW-0964">Secreted</keyword>
<keyword id="KW-0732">Signal</keyword>
<comment type="subcellular location">
    <subcellularLocation>
        <location>Secreted</location>
    </subcellularLocation>
</comment>
<organism>
    <name type="scientific">Mycobacterium tuberculosis (strain ATCC 25618 / H37Rv)</name>
    <dbReference type="NCBI Taxonomy" id="83332"/>
    <lineage>
        <taxon>Bacteria</taxon>
        <taxon>Bacillati</taxon>
        <taxon>Actinomycetota</taxon>
        <taxon>Actinomycetes</taxon>
        <taxon>Mycobacteriales</taxon>
        <taxon>Mycobacteriaceae</taxon>
        <taxon>Mycobacterium</taxon>
        <taxon>Mycobacterium tuberculosis complex</taxon>
    </lineage>
</organism>
<feature type="signal peptide" evidence="1">
    <location>
        <begin position="1"/>
        <end position="29"/>
    </location>
</feature>
<feature type="chain" id="PRO_0000021736" description="Immunogenic protein MPT63">
    <location>
        <begin position="30"/>
        <end position="159"/>
    </location>
</feature>
<feature type="strand" evidence="2">
    <location>
        <begin position="33"/>
        <end position="36"/>
    </location>
</feature>
<feature type="strand" evidence="2">
    <location>
        <begin position="40"/>
        <end position="45"/>
    </location>
</feature>
<feature type="turn" evidence="2">
    <location>
        <begin position="46"/>
        <end position="49"/>
    </location>
</feature>
<feature type="strand" evidence="2">
    <location>
        <begin position="50"/>
        <end position="61"/>
    </location>
</feature>
<feature type="strand" evidence="2">
    <location>
        <begin position="73"/>
        <end position="87"/>
    </location>
</feature>
<feature type="helix" evidence="2">
    <location>
        <begin position="93"/>
        <end position="95"/>
    </location>
</feature>
<feature type="strand" evidence="2">
    <location>
        <begin position="96"/>
        <end position="99"/>
    </location>
</feature>
<feature type="strand" evidence="2">
    <location>
        <begin position="105"/>
        <end position="108"/>
    </location>
</feature>
<feature type="strand" evidence="2">
    <location>
        <begin position="111"/>
        <end position="113"/>
    </location>
</feature>
<feature type="strand" evidence="2">
    <location>
        <begin position="128"/>
        <end position="137"/>
    </location>
</feature>
<feature type="strand" evidence="2">
    <location>
        <begin position="144"/>
        <end position="148"/>
    </location>
</feature>
<feature type="strand" evidence="2">
    <location>
        <begin position="150"/>
        <end position="158"/>
    </location>
</feature>